<protein>
    <recommendedName>
        <fullName evidence="3">Probable FMNH2-dependent monooxygenase SfnC</fullName>
        <ecNumber evidence="4">1.14.14.-</ecNumber>
    </recommendedName>
</protein>
<reference key="1">
    <citation type="journal article" date="2003" name="Appl. Microbiol. Biotechnol.">
        <title>Characterization and identification of genes essential for dimethyl sulfide utilization in Pseudomonas putida strain DS1.</title>
        <authorList>
            <person name="Endoh T."/>
            <person name="Kasuga K."/>
            <person name="Horinouchi M."/>
            <person name="Yoshida T."/>
            <person name="Habe H."/>
            <person name="Nojiri H."/>
            <person name="Omori T."/>
        </authorList>
    </citation>
    <scope>NUCLEOTIDE SEQUENCE [GENOMIC DNA]</scope>
    <source>
        <strain evidence="5">DS1</strain>
    </source>
</reference>
<reference key="2">
    <citation type="journal article" date="2003" name="Microbiology">
        <title>A CysB-regulated and sigma54-dependent regulator, SfnR, is essential for dimethyl sulfone metabolism of Pseudomonas putida strain DS1.</title>
        <authorList>
            <person name="Endoh T."/>
            <person name="Habe H."/>
            <person name="Yoshida T."/>
            <person name="Nojiri H."/>
            <person name="Omori T."/>
        </authorList>
    </citation>
    <scope>NUCLEOTIDE SEQUENCE [GENOMIC DNA]</scope>
    <scope>FUNCTION</scope>
    <scope>INDUCTION</scope>
    <source>
        <strain evidence="5">DS1</strain>
    </source>
</reference>
<proteinExistence type="evidence at transcript level"/>
<accession>Q845S8</accession>
<organism>
    <name type="scientific">Pseudomonas putida</name>
    <name type="common">Arthrobacter siderocapsulatus</name>
    <dbReference type="NCBI Taxonomy" id="303"/>
    <lineage>
        <taxon>Bacteria</taxon>
        <taxon>Pseudomonadati</taxon>
        <taxon>Pseudomonadota</taxon>
        <taxon>Gammaproteobacteria</taxon>
        <taxon>Pseudomonadales</taxon>
        <taxon>Pseudomonadaceae</taxon>
        <taxon>Pseudomonas</taxon>
    </lineage>
</organism>
<comment type="function">
    <text evidence="1">Involved in the dimethyl sulfide degradation pathway.</text>
</comment>
<comment type="induction">
    <text evidence="1">Under sulfate limitation conditions, it is transcriptionally activated by the LysR-type transcriptional regulator, CysB.</text>
</comment>
<name>SFNC_PSEPU</name>
<evidence type="ECO:0000269" key="1">
    <source>
    </source>
</evidence>
<evidence type="ECO:0000303" key="2">
    <source>
    </source>
</evidence>
<evidence type="ECO:0000303" key="3">
    <source>
    </source>
</evidence>
<evidence type="ECO:0000305" key="4"/>
<evidence type="ECO:0000312" key="5">
    <source>
        <dbReference type="EMBL" id="BAC66052.1"/>
    </source>
</evidence>
<feature type="chain" id="PRO_0000443539" description="Probable FMNH2-dependent monooxygenase SfnC">
    <location>
        <begin position="1"/>
        <end position="395"/>
    </location>
</feature>
<sequence length="395" mass="44071">MNAPVNTPPRPALAIARELAGQFAQTAVERDDRGGTPKAERDALRDSGLLSLVIPQAFGGQGASWHDTFAVVREFARVDSSIAHVFGFHHLMLATVRLFSRPDQWQPWFEQTARKQWFWGNALNPLDTRTVVKHFDGWCEFSGKKSFCSGASDSEMLIASAVDERAGGKLLIAAIPSGRTGISLHNDWNNIGQRQTDSGSATFERVRVEHNELLLDPGPLSTPFAALRPLIAQLHFANLFLGIAEGAFEEARQYTLKESRPWFRSSAASSAEDPYVLRHYGEFWVGLESVRLLIERAARQLDAAWAKEHALTAQERGDLALAIGTAKVAASRHGLDICNRLFEVTGARATHASLRFDRHWRNLRTQTLHDPVDYRIHELGEWALNDKRPAPSFYS</sequence>
<keyword id="KW-0285">Flavoprotein</keyword>
<keyword id="KW-0288">FMN</keyword>
<keyword id="KW-0503">Monooxygenase</keyword>
<keyword id="KW-0560">Oxidoreductase</keyword>
<gene>
    <name evidence="2" type="primary">sfnC</name>
</gene>
<dbReference type="EC" id="1.14.14.-" evidence="4"/>
<dbReference type="EMBL" id="AB091764">
    <property type="protein sequence ID" value="BAC66052.1"/>
    <property type="molecule type" value="Genomic_DNA"/>
</dbReference>
<dbReference type="SMR" id="Q845S8"/>
<dbReference type="GO" id="GO:0008470">
    <property type="term" value="F:3-methylbutanoyl-CoA dehydrogenase activity"/>
    <property type="evidence" value="ECO:0007669"/>
    <property type="project" value="TreeGrafter"/>
</dbReference>
<dbReference type="GO" id="GO:0050660">
    <property type="term" value="F:flavin adenine dinucleotide binding"/>
    <property type="evidence" value="ECO:0007669"/>
    <property type="project" value="InterPro"/>
</dbReference>
<dbReference type="GO" id="GO:0004497">
    <property type="term" value="F:monooxygenase activity"/>
    <property type="evidence" value="ECO:0007669"/>
    <property type="project" value="UniProtKB-KW"/>
</dbReference>
<dbReference type="GO" id="GO:0006552">
    <property type="term" value="P:L-leucine catabolic process"/>
    <property type="evidence" value="ECO:0007669"/>
    <property type="project" value="TreeGrafter"/>
</dbReference>
<dbReference type="CDD" id="cd01163">
    <property type="entry name" value="DszC"/>
    <property type="match status" value="1"/>
</dbReference>
<dbReference type="FunFam" id="2.40.110.10:FF:000020">
    <property type="entry name" value="Putative acyl-CoA dehydrogenase YdbM"/>
    <property type="match status" value="1"/>
</dbReference>
<dbReference type="Gene3D" id="1.10.540.10">
    <property type="entry name" value="Acyl-CoA dehydrogenase/oxidase, N-terminal domain"/>
    <property type="match status" value="1"/>
</dbReference>
<dbReference type="Gene3D" id="2.40.110.10">
    <property type="entry name" value="Butyryl-CoA Dehydrogenase, subunit A, domain 2"/>
    <property type="match status" value="1"/>
</dbReference>
<dbReference type="Gene3D" id="1.20.140.10">
    <property type="entry name" value="Butyryl-CoA Dehydrogenase, subunit A, domain 3"/>
    <property type="match status" value="1"/>
</dbReference>
<dbReference type="InterPro" id="IPR013107">
    <property type="entry name" value="Acyl-CoA_DH_C"/>
</dbReference>
<dbReference type="InterPro" id="IPR046373">
    <property type="entry name" value="Acyl-CoA_Oxase/DH_mid-dom_sf"/>
</dbReference>
<dbReference type="InterPro" id="IPR036250">
    <property type="entry name" value="AcylCo_DH-like_C"/>
</dbReference>
<dbReference type="InterPro" id="IPR013786">
    <property type="entry name" value="AcylCoA_DH/ox_N"/>
</dbReference>
<dbReference type="InterPro" id="IPR037069">
    <property type="entry name" value="AcylCoA_DH/ox_N_sf"/>
</dbReference>
<dbReference type="InterPro" id="IPR009100">
    <property type="entry name" value="AcylCoA_DH/oxidase_NM_dom_sf"/>
</dbReference>
<dbReference type="PANTHER" id="PTHR43884">
    <property type="entry name" value="ACYL-COA DEHYDROGENASE"/>
    <property type="match status" value="1"/>
</dbReference>
<dbReference type="PANTHER" id="PTHR43884:SF12">
    <property type="entry name" value="ISOVALERYL-COA DEHYDROGENASE, MITOCHONDRIAL-RELATED"/>
    <property type="match status" value="1"/>
</dbReference>
<dbReference type="Pfam" id="PF08028">
    <property type="entry name" value="Acyl-CoA_dh_2"/>
    <property type="match status" value="1"/>
</dbReference>
<dbReference type="Pfam" id="PF02771">
    <property type="entry name" value="Acyl-CoA_dh_N"/>
    <property type="match status" value="1"/>
</dbReference>
<dbReference type="PIRSF" id="PIRSF016578">
    <property type="entry name" value="HsaA"/>
    <property type="match status" value="1"/>
</dbReference>
<dbReference type="SUPFAM" id="SSF47203">
    <property type="entry name" value="Acyl-CoA dehydrogenase C-terminal domain-like"/>
    <property type="match status" value="1"/>
</dbReference>
<dbReference type="SUPFAM" id="SSF56645">
    <property type="entry name" value="Acyl-CoA dehydrogenase NM domain-like"/>
    <property type="match status" value="1"/>
</dbReference>